<accession>Q9JVP8</accession>
<accession>A1IQH2</accession>
<feature type="chain" id="PRO_0000214199" description="Na(+)-translocating NADH-quinone reductase subunit A">
    <location>
        <begin position="1"/>
        <end position="447"/>
    </location>
</feature>
<dbReference type="EC" id="7.2.1.1" evidence="1"/>
<dbReference type="EMBL" id="AL157959">
    <property type="protein sequence ID" value="CAM08003.1"/>
    <property type="molecule type" value="Genomic_DNA"/>
</dbReference>
<dbReference type="PIR" id="A81919">
    <property type="entry name" value="A81919"/>
</dbReference>
<dbReference type="RefSeq" id="WP_002236764.1">
    <property type="nucleotide sequence ID" value="NC_003116.1"/>
</dbReference>
<dbReference type="SMR" id="Q9JVP8"/>
<dbReference type="DNASU" id="906742"/>
<dbReference type="EnsemblBacteria" id="CAM08003">
    <property type="protein sequence ID" value="CAM08003"/>
    <property type="gene ID" value="NMA0752"/>
</dbReference>
<dbReference type="KEGG" id="nma:NMA0752"/>
<dbReference type="HOGENOM" id="CLU_046656_0_0_4"/>
<dbReference type="Proteomes" id="UP000000626">
    <property type="component" value="Chromosome"/>
</dbReference>
<dbReference type="GO" id="GO:0016655">
    <property type="term" value="F:oxidoreductase activity, acting on NAD(P)H, quinone or similar compound as acceptor"/>
    <property type="evidence" value="ECO:0007669"/>
    <property type="project" value="UniProtKB-UniRule"/>
</dbReference>
<dbReference type="GO" id="GO:0006814">
    <property type="term" value="P:sodium ion transport"/>
    <property type="evidence" value="ECO:0007669"/>
    <property type="project" value="UniProtKB-UniRule"/>
</dbReference>
<dbReference type="Gene3D" id="2.40.50.100">
    <property type="match status" value="1"/>
</dbReference>
<dbReference type="HAMAP" id="MF_00425">
    <property type="entry name" value="NqrA"/>
    <property type="match status" value="1"/>
</dbReference>
<dbReference type="InterPro" id="IPR008703">
    <property type="entry name" value="NqrA"/>
</dbReference>
<dbReference type="InterPro" id="IPR056148">
    <property type="entry name" value="NQRA_2nd"/>
</dbReference>
<dbReference type="InterPro" id="IPR022615">
    <property type="entry name" value="NqrA_C_domain"/>
</dbReference>
<dbReference type="InterPro" id="IPR056147">
    <property type="entry name" value="NQRA_N"/>
</dbReference>
<dbReference type="NCBIfam" id="TIGR01936">
    <property type="entry name" value="nqrA"/>
    <property type="match status" value="1"/>
</dbReference>
<dbReference type="NCBIfam" id="NF003759">
    <property type="entry name" value="PRK05352.1-2"/>
    <property type="match status" value="1"/>
</dbReference>
<dbReference type="NCBIfam" id="NF003761">
    <property type="entry name" value="PRK05352.1-4"/>
    <property type="match status" value="1"/>
</dbReference>
<dbReference type="PANTHER" id="PTHR37839">
    <property type="entry name" value="NA(+)-TRANSLOCATING NADH-QUINONE REDUCTASE SUBUNIT A"/>
    <property type="match status" value="1"/>
</dbReference>
<dbReference type="PANTHER" id="PTHR37839:SF1">
    <property type="entry name" value="NA(+)-TRANSLOCATING NADH-QUINONE REDUCTASE SUBUNIT A"/>
    <property type="match status" value="1"/>
</dbReference>
<dbReference type="Pfam" id="PF24836">
    <property type="entry name" value="NQRA_2nd"/>
    <property type="match status" value="1"/>
</dbReference>
<dbReference type="Pfam" id="PF05896">
    <property type="entry name" value="NQRA_N"/>
    <property type="match status" value="1"/>
</dbReference>
<dbReference type="Pfam" id="PF11973">
    <property type="entry name" value="NQRA_SLBB"/>
    <property type="match status" value="1"/>
</dbReference>
<name>NQRA_NEIMA</name>
<reference key="1">
    <citation type="journal article" date="2000" name="Nature">
        <title>Complete DNA sequence of a serogroup A strain of Neisseria meningitidis Z2491.</title>
        <authorList>
            <person name="Parkhill J."/>
            <person name="Achtman M."/>
            <person name="James K.D."/>
            <person name="Bentley S.D."/>
            <person name="Churcher C.M."/>
            <person name="Klee S.R."/>
            <person name="Morelli G."/>
            <person name="Basham D."/>
            <person name="Brown D."/>
            <person name="Chillingworth T."/>
            <person name="Davies R.M."/>
            <person name="Davis P."/>
            <person name="Devlin K."/>
            <person name="Feltwell T."/>
            <person name="Hamlin N."/>
            <person name="Holroyd S."/>
            <person name="Jagels K."/>
            <person name="Leather S."/>
            <person name="Moule S."/>
            <person name="Mungall K.L."/>
            <person name="Quail M.A."/>
            <person name="Rajandream M.A."/>
            <person name="Rutherford K.M."/>
            <person name="Simmonds M."/>
            <person name="Skelton J."/>
            <person name="Whitehead S."/>
            <person name="Spratt B.G."/>
            <person name="Barrell B.G."/>
        </authorList>
    </citation>
    <scope>NUCLEOTIDE SEQUENCE [LARGE SCALE GENOMIC DNA]</scope>
    <source>
        <strain>DSM 15465 / Z2491</strain>
    </source>
</reference>
<keyword id="KW-0406">Ion transport</keyword>
<keyword id="KW-0520">NAD</keyword>
<keyword id="KW-0915">Sodium</keyword>
<keyword id="KW-0739">Sodium transport</keyword>
<keyword id="KW-1278">Translocase</keyword>
<keyword id="KW-0813">Transport</keyword>
<keyword id="KW-0830">Ubiquinone</keyword>
<evidence type="ECO:0000255" key="1">
    <source>
        <dbReference type="HAMAP-Rule" id="MF_00425"/>
    </source>
</evidence>
<proteinExistence type="inferred from homology"/>
<gene>
    <name evidence="1" type="primary">nqrA</name>
    <name type="ordered locus">NMA0752</name>
</gene>
<sequence>MIKIKKGLNLPIAGRPEQVIYDGPVITEVALLGEEYAGMRPSMKVKEGDAVKKGQVLFEDKKNPGVVFTAPVSGKIAAIHRGEKRVLQSVVIAVEGNDEIEFERYAPEALANLSGEEVRRNLIQSGLWTALRTRPFSKIPAVDAEPFAIFVNAMDTNPLAADPVVVIKEAAEDFRRGLLVLSRLTERKIHVCKAAGADVPSENAANIETHEFGGPHPAGLSGTHIHFIEPVGANKTVWTINYQDVIAIGRLFATGRLNTERVIALGGSQVNKPRLLRTVLGAKVSQITAGELVDADNRVISGSVLNGAITQGAHDYLGRYHNQISVIEEGRSKELFGWVAPQPDKYSITRTTLGHFLKNKLFKFTTAVNGGDRAMVPIGTYERVMPLDILPTLLLRDLIVGDTDSAQALGCLELDEEDLALCSFVCPGKYEYGPLLRKVLETIEKEG</sequence>
<comment type="function">
    <text evidence="1">NQR complex catalyzes the reduction of ubiquinone-1 to ubiquinol by two successive reactions, coupled with the transport of Na(+) ions from the cytoplasm to the periplasm. NqrA to NqrE are probably involved in the second step, the conversion of ubisemiquinone to ubiquinol.</text>
</comment>
<comment type="catalytic activity">
    <reaction evidence="1">
        <text>a ubiquinone + n Na(+)(in) + NADH + H(+) = a ubiquinol + n Na(+)(out) + NAD(+)</text>
        <dbReference type="Rhea" id="RHEA:47748"/>
        <dbReference type="Rhea" id="RHEA-COMP:9565"/>
        <dbReference type="Rhea" id="RHEA-COMP:9566"/>
        <dbReference type="ChEBI" id="CHEBI:15378"/>
        <dbReference type="ChEBI" id="CHEBI:16389"/>
        <dbReference type="ChEBI" id="CHEBI:17976"/>
        <dbReference type="ChEBI" id="CHEBI:29101"/>
        <dbReference type="ChEBI" id="CHEBI:57540"/>
        <dbReference type="ChEBI" id="CHEBI:57945"/>
        <dbReference type="EC" id="7.2.1.1"/>
    </reaction>
</comment>
<comment type="subunit">
    <text evidence="1">Composed of six subunits; NqrA, NqrB, NqrC, NqrD, NqrE and NqrF.</text>
</comment>
<comment type="similarity">
    <text evidence="1">Belongs to the NqrA family.</text>
</comment>
<protein>
    <recommendedName>
        <fullName evidence="1">Na(+)-translocating NADH-quinone reductase subunit A</fullName>
        <shortName evidence="1">Na(+)-NQR subunit A</shortName>
        <shortName evidence="1">Na(+)-translocating NQR subunit A</shortName>
        <ecNumber evidence="1">7.2.1.1</ecNumber>
    </recommendedName>
    <alternativeName>
        <fullName evidence="1">NQR complex subunit A</fullName>
    </alternativeName>
    <alternativeName>
        <fullName evidence="1">NQR-1 subunit A</fullName>
    </alternativeName>
</protein>
<organism>
    <name type="scientific">Neisseria meningitidis serogroup A / serotype 4A (strain DSM 15465 / Z2491)</name>
    <dbReference type="NCBI Taxonomy" id="122587"/>
    <lineage>
        <taxon>Bacteria</taxon>
        <taxon>Pseudomonadati</taxon>
        <taxon>Pseudomonadota</taxon>
        <taxon>Betaproteobacteria</taxon>
        <taxon>Neisseriales</taxon>
        <taxon>Neisseriaceae</taxon>
        <taxon>Neisseria</taxon>
    </lineage>
</organism>